<gene>
    <name evidence="1" type="primary">sra-11</name>
    <name type="ORF">CBG20639</name>
</gene>
<sequence>MSSPDTPVCASPQQMEMYNSHFYTCALFFNLLIAFTSMTLIIMAIRKLLTESIINTSTRMFLIVGLLCCSLHQTAYIVLRVQVIFQILFKLDQPCKLYYKAYDCKYVTFSLVAGNTGMIFIQSAMTIDRILTTVFTNLWPKLKYWPGVILSSFMIGCNFTNVQFIFWNDPLTDYVPTCGQFPPKSVGRFQKFLEIALYMSLAHMVINVIILYINVVQDRRQRLVSTHDQSQSFDVNQRFQSRVALKSTQAIFFLSMSQFLSCFLYTIFTKLYLTLQPDMTPLQSGLTLALTYTTPYACIAIPSLIMVTLTFIRNQRHRSINALRSQTETGDQYMQKIKKIWDK</sequence>
<evidence type="ECO:0000250" key="1">
    <source>
        <dbReference type="UniProtKB" id="Q20411"/>
    </source>
</evidence>
<evidence type="ECO:0000255" key="2"/>
<evidence type="ECO:0000269" key="3">
    <source>
    </source>
</evidence>
<evidence type="ECO:0000305" key="4"/>
<organism>
    <name type="scientific">Caenorhabditis briggsae</name>
    <dbReference type="NCBI Taxonomy" id="6238"/>
    <lineage>
        <taxon>Eukaryota</taxon>
        <taxon>Metazoa</taxon>
        <taxon>Ecdysozoa</taxon>
        <taxon>Nematoda</taxon>
        <taxon>Chromadorea</taxon>
        <taxon>Rhabditida</taxon>
        <taxon>Rhabditina</taxon>
        <taxon>Rhabditomorpha</taxon>
        <taxon>Rhabditoidea</taxon>
        <taxon>Rhabditidae</taxon>
        <taxon>Peloderinae</taxon>
        <taxon>Caenorhabditis</taxon>
    </lineage>
</organism>
<feature type="chain" id="PRO_0000273259" description="Serpentine receptor class alpha-11">
    <location>
        <begin position="1"/>
        <end position="343"/>
    </location>
</feature>
<feature type="topological domain" description="Extracellular" evidence="2 4">
    <location>
        <begin position="1"/>
        <end position="24"/>
    </location>
</feature>
<feature type="transmembrane region" description="Helical; Name=1" evidence="2">
    <location>
        <begin position="25"/>
        <end position="45"/>
    </location>
</feature>
<feature type="topological domain" description="Cytoplasmic" evidence="2 4">
    <location>
        <begin position="46"/>
        <end position="60"/>
    </location>
</feature>
<feature type="transmembrane region" description="Helical; Name=2" evidence="2">
    <location>
        <begin position="61"/>
        <end position="81"/>
    </location>
</feature>
<feature type="topological domain" description="Extracellular" evidence="2 4">
    <location>
        <begin position="82"/>
        <end position="106"/>
    </location>
</feature>
<feature type="transmembrane region" description="Helical; Name=3" evidence="2">
    <location>
        <begin position="107"/>
        <end position="127"/>
    </location>
</feature>
<feature type="topological domain" description="Cytoplasmic" evidence="2 4">
    <location>
        <begin position="128"/>
        <end position="146"/>
    </location>
</feature>
<feature type="transmembrane region" description="Helical; Name=4" evidence="2">
    <location>
        <begin position="147"/>
        <end position="167"/>
    </location>
</feature>
<feature type="topological domain" description="Extracellular" evidence="2 4">
    <location>
        <begin position="168"/>
        <end position="192"/>
    </location>
</feature>
<feature type="transmembrane region" description="Helical; Name=5" evidence="2">
    <location>
        <begin position="193"/>
        <end position="213"/>
    </location>
</feature>
<feature type="topological domain" description="Cytoplasmic" evidence="2 4">
    <location>
        <begin position="214"/>
        <end position="247"/>
    </location>
</feature>
<feature type="transmembrane region" description="Helical; Name=6" evidence="2">
    <location>
        <begin position="248"/>
        <end position="268"/>
    </location>
</feature>
<feature type="topological domain" description="Extracellular" evidence="2 4">
    <location>
        <begin position="269"/>
        <end position="291"/>
    </location>
</feature>
<feature type="transmembrane region" description="Helical; Name=7" evidence="2">
    <location>
        <begin position="292"/>
        <end position="312"/>
    </location>
</feature>
<feature type="topological domain" description="Cytoplasmic" evidence="2 4">
    <location>
        <begin position="313"/>
        <end position="343"/>
    </location>
</feature>
<reference key="1">
    <citation type="journal article" date="2003" name="PLoS Biol.">
        <title>The genome sequence of Caenorhabditis briggsae: a platform for comparative genomics.</title>
        <authorList>
            <person name="Stein L.D."/>
            <person name="Bao Z."/>
            <person name="Blasiar D."/>
            <person name="Blumenthal T."/>
            <person name="Brent M.R."/>
            <person name="Chen N."/>
            <person name="Chinwalla A."/>
            <person name="Clarke L."/>
            <person name="Clee C."/>
            <person name="Coghlan A."/>
            <person name="Coulson A."/>
            <person name="D'Eustachio P."/>
            <person name="Fitch D.H.A."/>
            <person name="Fulton L.A."/>
            <person name="Fulton R.E."/>
            <person name="Griffiths-Jones S."/>
            <person name="Harris T.W."/>
            <person name="Hillier L.W."/>
            <person name="Kamath R."/>
            <person name="Kuwabara P.E."/>
            <person name="Mardis E.R."/>
            <person name="Marra M.A."/>
            <person name="Miner T.L."/>
            <person name="Minx P."/>
            <person name="Mullikin J.C."/>
            <person name="Plumb R.W."/>
            <person name="Rogers J."/>
            <person name="Schein J.E."/>
            <person name="Sohrmann M."/>
            <person name="Spieth J."/>
            <person name="Stajich J.E."/>
            <person name="Wei C."/>
            <person name="Willey D."/>
            <person name="Wilson R.K."/>
            <person name="Durbin R.M."/>
            <person name="Waterston R.H."/>
        </authorList>
    </citation>
    <scope>NUCLEOTIDE SEQUENCE [LARGE SCALE GENOMIC DNA]</scope>
    <source>
        <strain evidence="3">AF16</strain>
    </source>
</reference>
<comment type="function">
    <text evidence="1">A G protein-coupled receptor required for olfactory imprinting a requisite in ordorant response such as benzaldehyde and isoamylalcohol.</text>
</comment>
<comment type="subcellular location">
    <subcellularLocation>
        <location evidence="2">Membrane</location>
        <topology evidence="2">Multi-pass membrane protein</topology>
    </subcellularLocation>
</comment>
<comment type="similarity">
    <text evidence="4">Belongs to the nematode receptor-like protein sra family.</text>
</comment>
<accession>Q60T36</accession>
<accession>A8XY97</accession>
<dbReference type="EMBL" id="HE600991">
    <property type="protein sequence ID" value="CAP37614.1"/>
    <property type="molecule type" value="Genomic_DNA"/>
</dbReference>
<dbReference type="FunCoup" id="Q60T36">
    <property type="interactions" value="5"/>
</dbReference>
<dbReference type="STRING" id="6238.Q60T36"/>
<dbReference type="EnsemblMetazoa" id="CBG20639.1">
    <property type="protein sequence ID" value="CBG20639.1"/>
    <property type="gene ID" value="WBGene00039585"/>
</dbReference>
<dbReference type="KEGG" id="cbr:CBG_20639"/>
<dbReference type="CTD" id="8573481"/>
<dbReference type="WormBase" id="CBG20639">
    <property type="protein sequence ID" value="CBP19913"/>
    <property type="gene ID" value="WBGene00039585"/>
    <property type="gene designation" value="Cbr-sra-11"/>
</dbReference>
<dbReference type="eggNOG" id="ENOG502TFIZ">
    <property type="taxonomic scope" value="Eukaryota"/>
</dbReference>
<dbReference type="HOGENOM" id="CLU_048025_0_1_1"/>
<dbReference type="InParanoid" id="Q60T36"/>
<dbReference type="OMA" id="QTAYIVL"/>
<dbReference type="Proteomes" id="UP000008549">
    <property type="component" value="Unassembled WGS sequence"/>
</dbReference>
<dbReference type="GO" id="GO:0016020">
    <property type="term" value="C:membrane"/>
    <property type="evidence" value="ECO:0007669"/>
    <property type="project" value="UniProtKB-SubCell"/>
</dbReference>
<dbReference type="GO" id="GO:0004930">
    <property type="term" value="F:G protein-coupled receptor activity"/>
    <property type="evidence" value="ECO:0007669"/>
    <property type="project" value="InterPro"/>
</dbReference>
<dbReference type="GO" id="GO:0004984">
    <property type="term" value="F:olfactory receptor activity"/>
    <property type="evidence" value="ECO:0000318"/>
    <property type="project" value="GO_Central"/>
</dbReference>
<dbReference type="GO" id="GO:0050907">
    <property type="term" value="P:detection of chemical stimulus involved in sensory perception"/>
    <property type="evidence" value="ECO:0000318"/>
    <property type="project" value="GO_Central"/>
</dbReference>
<dbReference type="GO" id="GO:0008355">
    <property type="term" value="P:olfactory learning"/>
    <property type="evidence" value="ECO:0007669"/>
    <property type="project" value="EnsemblMetazoa"/>
</dbReference>
<dbReference type="InterPro" id="IPR000344">
    <property type="entry name" value="7TM_GPCR_serpentine_rcpt_Sra"/>
</dbReference>
<dbReference type="InterPro" id="IPR051080">
    <property type="entry name" value="Nematode_rcpt-like_serp_alpha"/>
</dbReference>
<dbReference type="PANTHER" id="PTHR31357">
    <property type="entry name" value="SERPENTINE RECEPTOR CLASS ALPHA-10"/>
    <property type="match status" value="1"/>
</dbReference>
<dbReference type="PANTHER" id="PTHR31357:SF11">
    <property type="entry name" value="SERPENTINE RECEPTOR CLASS ALPHA-11"/>
    <property type="match status" value="1"/>
</dbReference>
<dbReference type="Pfam" id="PF02117">
    <property type="entry name" value="7TM_GPCR_Sra"/>
    <property type="match status" value="1"/>
</dbReference>
<dbReference type="PRINTS" id="PR00697">
    <property type="entry name" value="TMPROTEINSRA"/>
</dbReference>
<keyword id="KW-0472">Membrane</keyword>
<keyword id="KW-0552">Olfaction</keyword>
<keyword id="KW-0675">Receptor</keyword>
<keyword id="KW-1185">Reference proteome</keyword>
<keyword id="KW-0716">Sensory transduction</keyword>
<keyword id="KW-0812">Transmembrane</keyword>
<keyword id="KW-1133">Transmembrane helix</keyword>
<protein>
    <recommendedName>
        <fullName>Serpentine receptor class alpha-11</fullName>
        <shortName>Protein sra-11</shortName>
    </recommendedName>
</protein>
<proteinExistence type="inferred from homology"/>
<name>SRA11_CAEBR</name>